<name>UPPP_NEIMA</name>
<comment type="function">
    <text evidence="1">Catalyzes the dephosphorylation of undecaprenyl diphosphate (UPP). Confers resistance to bacitracin.</text>
</comment>
<comment type="catalytic activity">
    <reaction evidence="1">
        <text>di-trans,octa-cis-undecaprenyl diphosphate + H2O = di-trans,octa-cis-undecaprenyl phosphate + phosphate + H(+)</text>
        <dbReference type="Rhea" id="RHEA:28094"/>
        <dbReference type="ChEBI" id="CHEBI:15377"/>
        <dbReference type="ChEBI" id="CHEBI:15378"/>
        <dbReference type="ChEBI" id="CHEBI:43474"/>
        <dbReference type="ChEBI" id="CHEBI:58405"/>
        <dbReference type="ChEBI" id="CHEBI:60392"/>
        <dbReference type="EC" id="3.6.1.27"/>
    </reaction>
</comment>
<comment type="subcellular location">
    <subcellularLocation>
        <location evidence="1">Cell inner membrane</location>
        <topology evidence="1">Multi-pass membrane protein</topology>
    </subcellularLocation>
</comment>
<comment type="miscellaneous">
    <text>Bacitracin is thought to be involved in the inhibition of peptidoglycan synthesis by sequestering undecaprenyl diphosphate, thereby reducing the pool of lipid carrier available.</text>
</comment>
<comment type="similarity">
    <text evidence="1">Belongs to the UppP family.</text>
</comment>
<sequence length="273" mass="30459">MDFLIVLKALMMGLVEGFTEFLPISSTGHLIVFGNLIDFHSNHKVFEITIQLGAVLAVVFEYRQRFSNVLHGVGKDRKANRFVLNLAIAFIPAAVMGLLFGKQIKEYLFNPLSVAVMLVLGGFFILWVEKRQSRAEPKIVDVDALRPIDALMIGVAQVFALVPGTSRSGSTIMGGMLWGIERKTATEFSFFLAVPMMVAATAYDVLKHYRFFTLHDVGLILIGFVAAFVSGLVAVKALLRFVSKKNYIPFAYYRIVFGIAIIILWLSGWISWE</sequence>
<organism>
    <name type="scientific">Neisseria meningitidis serogroup A / serotype 4A (strain DSM 15465 / Z2491)</name>
    <dbReference type="NCBI Taxonomy" id="122587"/>
    <lineage>
        <taxon>Bacteria</taxon>
        <taxon>Pseudomonadati</taxon>
        <taxon>Pseudomonadota</taxon>
        <taxon>Betaproteobacteria</taxon>
        <taxon>Neisseriales</taxon>
        <taxon>Neisseriaceae</taxon>
        <taxon>Neisseria</taxon>
    </lineage>
</organism>
<reference key="1">
    <citation type="journal article" date="2000" name="Nature">
        <title>Complete DNA sequence of a serogroup A strain of Neisseria meningitidis Z2491.</title>
        <authorList>
            <person name="Parkhill J."/>
            <person name="Achtman M."/>
            <person name="James K.D."/>
            <person name="Bentley S.D."/>
            <person name="Churcher C.M."/>
            <person name="Klee S.R."/>
            <person name="Morelli G."/>
            <person name="Basham D."/>
            <person name="Brown D."/>
            <person name="Chillingworth T."/>
            <person name="Davies R.M."/>
            <person name="Davis P."/>
            <person name="Devlin K."/>
            <person name="Feltwell T."/>
            <person name="Hamlin N."/>
            <person name="Holroyd S."/>
            <person name="Jagels K."/>
            <person name="Leather S."/>
            <person name="Moule S."/>
            <person name="Mungall K.L."/>
            <person name="Quail M.A."/>
            <person name="Rajandream M.A."/>
            <person name="Rutherford K.M."/>
            <person name="Simmonds M."/>
            <person name="Skelton J."/>
            <person name="Whitehead S."/>
            <person name="Spratt B.G."/>
            <person name="Barrell B.G."/>
        </authorList>
    </citation>
    <scope>NUCLEOTIDE SEQUENCE [LARGE SCALE GENOMIC DNA]</scope>
    <source>
        <strain>DSM 15465 / Z2491</strain>
    </source>
</reference>
<accession>Q9JSY6</accession>
<accession>A1ITR1</accession>
<feature type="chain" id="PRO_0000151168" description="Undecaprenyl-diphosphatase">
    <location>
        <begin position="1"/>
        <end position="273"/>
    </location>
</feature>
<feature type="transmembrane region" description="Helical" evidence="1">
    <location>
        <begin position="13"/>
        <end position="35"/>
    </location>
</feature>
<feature type="transmembrane region" description="Helical" evidence="1">
    <location>
        <begin position="45"/>
        <end position="62"/>
    </location>
</feature>
<feature type="transmembrane region" description="Helical" evidence="1">
    <location>
        <begin position="82"/>
        <end position="102"/>
    </location>
</feature>
<feature type="transmembrane region" description="Helical" evidence="1">
    <location>
        <begin position="108"/>
        <end position="128"/>
    </location>
</feature>
<feature type="transmembrane region" description="Helical" evidence="1">
    <location>
        <begin position="186"/>
        <end position="206"/>
    </location>
</feature>
<feature type="transmembrane region" description="Helical" evidence="1">
    <location>
        <begin position="219"/>
        <end position="239"/>
    </location>
</feature>
<feature type="transmembrane region" description="Helical" evidence="1">
    <location>
        <begin position="250"/>
        <end position="270"/>
    </location>
</feature>
<protein>
    <recommendedName>
        <fullName evidence="1">Undecaprenyl-diphosphatase</fullName>
        <ecNumber evidence="1">3.6.1.27</ecNumber>
    </recommendedName>
    <alternativeName>
        <fullName evidence="1">Bacitracin resistance protein</fullName>
    </alternativeName>
    <alternativeName>
        <fullName evidence="1">Undecaprenyl pyrophosphate phosphatase</fullName>
    </alternativeName>
</protein>
<gene>
    <name evidence="1" type="primary">uppP</name>
    <name type="synonym">bacA</name>
    <name type="synonym">upk</name>
    <name type="ordered locus">NMA2077</name>
</gene>
<proteinExistence type="inferred from homology"/>
<dbReference type="EC" id="3.6.1.27" evidence="1"/>
<dbReference type="EMBL" id="AL157959">
    <property type="protein sequence ID" value="CAM09179.1"/>
    <property type="molecule type" value="Genomic_DNA"/>
</dbReference>
<dbReference type="PIR" id="G81778">
    <property type="entry name" value="G81778"/>
</dbReference>
<dbReference type="RefSeq" id="WP_002220359.1">
    <property type="nucleotide sequence ID" value="NC_003116.1"/>
</dbReference>
<dbReference type="SMR" id="Q9JSY6"/>
<dbReference type="EnsemblBacteria" id="CAM09179">
    <property type="protein sequence ID" value="CAM09179"/>
    <property type="gene ID" value="NMA2077"/>
</dbReference>
<dbReference type="KEGG" id="nma:NMA2077"/>
<dbReference type="HOGENOM" id="CLU_060296_2_0_4"/>
<dbReference type="Proteomes" id="UP000000626">
    <property type="component" value="Chromosome"/>
</dbReference>
<dbReference type="GO" id="GO:0005886">
    <property type="term" value="C:plasma membrane"/>
    <property type="evidence" value="ECO:0007669"/>
    <property type="project" value="UniProtKB-SubCell"/>
</dbReference>
<dbReference type="GO" id="GO:0050380">
    <property type="term" value="F:undecaprenyl-diphosphatase activity"/>
    <property type="evidence" value="ECO:0007669"/>
    <property type="project" value="UniProtKB-UniRule"/>
</dbReference>
<dbReference type="GO" id="GO:0071555">
    <property type="term" value="P:cell wall organization"/>
    <property type="evidence" value="ECO:0007669"/>
    <property type="project" value="UniProtKB-KW"/>
</dbReference>
<dbReference type="GO" id="GO:0009252">
    <property type="term" value="P:peptidoglycan biosynthetic process"/>
    <property type="evidence" value="ECO:0007669"/>
    <property type="project" value="UniProtKB-KW"/>
</dbReference>
<dbReference type="GO" id="GO:0008360">
    <property type="term" value="P:regulation of cell shape"/>
    <property type="evidence" value="ECO:0007669"/>
    <property type="project" value="UniProtKB-KW"/>
</dbReference>
<dbReference type="GO" id="GO:0046677">
    <property type="term" value="P:response to antibiotic"/>
    <property type="evidence" value="ECO:0007669"/>
    <property type="project" value="UniProtKB-UniRule"/>
</dbReference>
<dbReference type="HAMAP" id="MF_01006">
    <property type="entry name" value="Undec_diphosphatase"/>
    <property type="match status" value="1"/>
</dbReference>
<dbReference type="InterPro" id="IPR003824">
    <property type="entry name" value="UppP"/>
</dbReference>
<dbReference type="NCBIfam" id="NF001389">
    <property type="entry name" value="PRK00281.1-2"/>
    <property type="match status" value="1"/>
</dbReference>
<dbReference type="NCBIfam" id="NF001390">
    <property type="entry name" value="PRK00281.1-4"/>
    <property type="match status" value="1"/>
</dbReference>
<dbReference type="NCBIfam" id="TIGR00753">
    <property type="entry name" value="undec_PP_bacA"/>
    <property type="match status" value="1"/>
</dbReference>
<dbReference type="PANTHER" id="PTHR30622">
    <property type="entry name" value="UNDECAPRENYL-DIPHOSPHATASE"/>
    <property type="match status" value="1"/>
</dbReference>
<dbReference type="PANTHER" id="PTHR30622:SF3">
    <property type="entry name" value="UNDECAPRENYL-DIPHOSPHATASE"/>
    <property type="match status" value="1"/>
</dbReference>
<dbReference type="Pfam" id="PF02673">
    <property type="entry name" value="BacA"/>
    <property type="match status" value="1"/>
</dbReference>
<keyword id="KW-0046">Antibiotic resistance</keyword>
<keyword id="KW-0997">Cell inner membrane</keyword>
<keyword id="KW-1003">Cell membrane</keyword>
<keyword id="KW-0133">Cell shape</keyword>
<keyword id="KW-0961">Cell wall biogenesis/degradation</keyword>
<keyword id="KW-0378">Hydrolase</keyword>
<keyword id="KW-0472">Membrane</keyword>
<keyword id="KW-0573">Peptidoglycan synthesis</keyword>
<keyword id="KW-0812">Transmembrane</keyword>
<keyword id="KW-1133">Transmembrane helix</keyword>
<evidence type="ECO:0000255" key="1">
    <source>
        <dbReference type="HAMAP-Rule" id="MF_01006"/>
    </source>
</evidence>